<accession>Q864H1</accession>
<proteinExistence type="inferred from homology"/>
<sequence length="317" mass="34861">MPMHGAQRKLLGSLNSTPTATSNLGLAANHTGAPCLEVSIPDGLFLSLGLVSLVENVLVVAAIAKNRNLHSSMYCFICCLALSDLLVSGSNMLETAVILLLEAGALATRTSAMQQLHNTIDVLTCSSMLCSLCFLGAIAVDRYISIFYALRYHSIMTLPRAQRAIAAIWVASXLSSTLFITYYDHAAVLLCLVVFFLAMLVLMAVLYVHMLARACQHAHGIIRLHKRQTPAHQGFGLRGAATLTILLGIFFLCWGPFFLHLTLVVFCPQHLTCSCIFKNFKVFLTLIICNTIIDPLIYAFRSQELRRTLKEVLLCSW</sequence>
<organism>
    <name type="scientific">Saguinus midas</name>
    <name type="common">Golden-handed tamarin</name>
    <name type="synonym">Simia midas</name>
    <dbReference type="NCBI Taxonomy" id="30586"/>
    <lineage>
        <taxon>Eukaryota</taxon>
        <taxon>Metazoa</taxon>
        <taxon>Chordata</taxon>
        <taxon>Craniata</taxon>
        <taxon>Vertebrata</taxon>
        <taxon>Euteleostomi</taxon>
        <taxon>Mammalia</taxon>
        <taxon>Eutheria</taxon>
        <taxon>Euarchontoglires</taxon>
        <taxon>Primates</taxon>
        <taxon>Haplorrhini</taxon>
        <taxon>Platyrrhini</taxon>
        <taxon>Cebidae</taxon>
        <taxon>Callitrichinae</taxon>
        <taxon>Saguinus</taxon>
    </lineage>
</organism>
<dbReference type="EMBL" id="AY205126">
    <property type="protein sequence ID" value="AAP31000.1"/>
    <property type="molecule type" value="Genomic_DNA"/>
</dbReference>
<dbReference type="GlyCosmos" id="Q864H1">
    <property type="glycosylation" value="1 site, No reported glycans"/>
</dbReference>
<dbReference type="GO" id="GO:0005886">
    <property type="term" value="C:plasma membrane"/>
    <property type="evidence" value="ECO:0000250"/>
    <property type="project" value="UniProtKB"/>
</dbReference>
<dbReference type="GO" id="GO:0004980">
    <property type="term" value="F:melanocyte-stimulating hormone receptor activity"/>
    <property type="evidence" value="ECO:0007669"/>
    <property type="project" value="InterPro"/>
</dbReference>
<dbReference type="GO" id="GO:0007189">
    <property type="term" value="P:adenylate cyclase-activating G protein-coupled receptor signaling pathway"/>
    <property type="evidence" value="ECO:0007669"/>
    <property type="project" value="UniProtKB-ARBA"/>
</dbReference>
<dbReference type="FunFam" id="1.20.1070.10:FF:000211">
    <property type="entry name" value="Melanocyte-stimulating hormone receptor"/>
    <property type="match status" value="1"/>
</dbReference>
<dbReference type="Gene3D" id="1.20.1070.10">
    <property type="entry name" value="Rhodopsin 7-helix transmembrane proteins"/>
    <property type="match status" value="1"/>
</dbReference>
<dbReference type="InterPro" id="IPR000276">
    <property type="entry name" value="GPCR_Rhodpsn"/>
</dbReference>
<dbReference type="InterPro" id="IPR017452">
    <property type="entry name" value="GPCR_Rhodpsn_7TM"/>
</dbReference>
<dbReference type="InterPro" id="IPR001671">
    <property type="entry name" value="Melcrt_ACTH_rcpt"/>
</dbReference>
<dbReference type="InterPro" id="IPR000761">
    <property type="entry name" value="MSH_rcpt"/>
</dbReference>
<dbReference type="PANTHER" id="PTHR22750">
    <property type="entry name" value="G-PROTEIN COUPLED RECEPTOR"/>
    <property type="match status" value="1"/>
</dbReference>
<dbReference type="Pfam" id="PF00001">
    <property type="entry name" value="7tm_1"/>
    <property type="match status" value="2"/>
</dbReference>
<dbReference type="PRINTS" id="PR00237">
    <property type="entry name" value="GPCRRHODOPSN"/>
</dbReference>
<dbReference type="PRINTS" id="PR00534">
    <property type="entry name" value="MCRFAMILY"/>
</dbReference>
<dbReference type="PRINTS" id="PR00536">
    <property type="entry name" value="MELNOCYTESHR"/>
</dbReference>
<dbReference type="SMART" id="SM01381">
    <property type="entry name" value="7TM_GPCR_Srsx"/>
    <property type="match status" value="1"/>
</dbReference>
<dbReference type="SUPFAM" id="SSF81321">
    <property type="entry name" value="Family A G protein-coupled receptor-like"/>
    <property type="match status" value="1"/>
</dbReference>
<dbReference type="PROSITE" id="PS00237">
    <property type="entry name" value="G_PROTEIN_RECEP_F1_1"/>
    <property type="match status" value="1"/>
</dbReference>
<dbReference type="PROSITE" id="PS50262">
    <property type="entry name" value="G_PROTEIN_RECEP_F1_2"/>
    <property type="match status" value="1"/>
</dbReference>
<reference key="1">
    <citation type="journal article" date="2003" name="Am. J. Phys. Anthropol.">
        <title>Evolution of a pigmentation gene, the melanocortin-1 receptor, in primates.</title>
        <authorList>
            <person name="Mundy N.I."/>
            <person name="Kelly J."/>
        </authorList>
    </citation>
    <scope>NUCLEOTIDE SEQUENCE [GENOMIC DNA]</scope>
    <source>
        <strain>Isolate 1</strain>
    </source>
</reference>
<evidence type="ECO:0000250" key="1">
    <source>
        <dbReference type="UniProtKB" id="Q01726"/>
    </source>
</evidence>
<evidence type="ECO:0000255" key="2"/>
<evidence type="ECO:0000255" key="3">
    <source>
        <dbReference type="PROSITE-ProRule" id="PRU00521"/>
    </source>
</evidence>
<protein>
    <recommendedName>
        <fullName>Melanocyte-stimulating hormone receptor</fullName>
        <shortName>MSH-R</shortName>
    </recommendedName>
    <alternativeName>
        <fullName>Melanocortin receptor 1</fullName>
        <shortName>MC1-R</shortName>
    </alternativeName>
</protein>
<gene>
    <name type="primary">MC1R</name>
</gene>
<comment type="function">
    <text evidence="1">Receptor for MSH (alpha, beta and gamma) and ACTH. The activity of this receptor is mediated by G proteins which activate adenylate cyclase. Mediates melanogenesis, the production of eumelanin (black/brown) and phaeomelanin (red/yellow), via regulation of cAMP signaling in melanocytes.</text>
</comment>
<comment type="subunit">
    <text evidence="1">Interacts with MGRN1, but does not undergo MGRN1-mediated ubiquitination; this interaction competes with GNAS-binding and thus inhibits agonist-induced cAMP production. Interacts with OPN3; the interaction results in a decrease in MC1R-mediated cAMP signaling and ultimately a decrease in melanin production in melanocytes.</text>
</comment>
<comment type="subcellular location">
    <subcellularLocation>
        <location evidence="1">Cell membrane</location>
        <topology evidence="2">Multi-pass membrane protein</topology>
    </subcellularLocation>
</comment>
<comment type="similarity">
    <text evidence="3">Belongs to the G-protein coupled receptor 1 family.</text>
</comment>
<feature type="chain" id="PRO_0000069847" description="Melanocyte-stimulating hormone receptor">
    <location>
        <begin position="1"/>
        <end position="317"/>
    </location>
</feature>
<feature type="topological domain" description="Extracellular" evidence="2">
    <location>
        <begin position="1"/>
        <end position="37"/>
    </location>
</feature>
<feature type="transmembrane region" description="Helical; Name=1" evidence="2">
    <location>
        <begin position="38"/>
        <end position="63"/>
    </location>
</feature>
<feature type="topological domain" description="Cytoplasmic" evidence="2">
    <location>
        <begin position="64"/>
        <end position="72"/>
    </location>
</feature>
<feature type="transmembrane region" description="Helical; Name=2" evidence="2">
    <location>
        <begin position="73"/>
        <end position="93"/>
    </location>
</feature>
<feature type="topological domain" description="Extracellular" evidence="2">
    <location>
        <begin position="94"/>
        <end position="118"/>
    </location>
</feature>
<feature type="transmembrane region" description="Helical; Name=3" evidence="2">
    <location>
        <begin position="119"/>
        <end position="140"/>
    </location>
</feature>
<feature type="topological domain" description="Cytoplasmic" evidence="2">
    <location>
        <begin position="141"/>
        <end position="163"/>
    </location>
</feature>
<feature type="transmembrane region" description="Helical; Name=4" evidence="2">
    <location>
        <begin position="164"/>
        <end position="183"/>
    </location>
</feature>
<feature type="topological domain" description="Extracellular" evidence="2">
    <location>
        <begin position="184"/>
        <end position="191"/>
    </location>
</feature>
<feature type="transmembrane region" description="Helical; Name=5" evidence="2">
    <location>
        <begin position="192"/>
        <end position="211"/>
    </location>
</feature>
<feature type="topological domain" description="Cytoplasmic" evidence="2">
    <location>
        <begin position="212"/>
        <end position="240"/>
    </location>
</feature>
<feature type="transmembrane region" description="Helical; Name=6" evidence="2">
    <location>
        <begin position="241"/>
        <end position="266"/>
    </location>
</feature>
<feature type="topological domain" description="Extracellular" evidence="2">
    <location>
        <begin position="267"/>
        <end position="279"/>
    </location>
</feature>
<feature type="transmembrane region" description="Helical; Name=7" evidence="2">
    <location>
        <begin position="280"/>
        <end position="300"/>
    </location>
</feature>
<feature type="topological domain" description="Cytoplasmic" evidence="2">
    <location>
        <begin position="301"/>
        <end position="317"/>
    </location>
</feature>
<feature type="lipid moiety-binding region" description="S-palmitoyl cysteine" evidence="2">
    <location>
        <position position="315"/>
    </location>
</feature>
<feature type="glycosylation site" description="N-linked (GlcNAc...) asparagine" evidence="2">
    <location>
        <position position="29"/>
    </location>
</feature>
<name>MSHR_SAGMI</name>
<keyword id="KW-1003">Cell membrane</keyword>
<keyword id="KW-0297">G-protein coupled receptor</keyword>
<keyword id="KW-0325">Glycoprotein</keyword>
<keyword id="KW-0449">Lipoprotein</keyword>
<keyword id="KW-0472">Membrane</keyword>
<keyword id="KW-0564">Palmitate</keyword>
<keyword id="KW-0675">Receptor</keyword>
<keyword id="KW-0807">Transducer</keyword>
<keyword id="KW-0812">Transmembrane</keyword>
<keyword id="KW-1133">Transmembrane helix</keyword>